<protein>
    <recommendedName>
        <fullName evidence="1">UDP-N-acetylglucosamine 1-carboxyvinyltransferase</fullName>
        <ecNumber evidence="1">2.5.1.7</ecNumber>
    </recommendedName>
    <alternativeName>
        <fullName evidence="1">Enoylpyruvate transferase</fullName>
    </alternativeName>
    <alternativeName>
        <fullName evidence="1">UDP-N-acetylglucosamine enolpyruvyl transferase</fullName>
        <shortName evidence="1">EPT</shortName>
    </alternativeName>
</protein>
<evidence type="ECO:0000255" key="1">
    <source>
        <dbReference type="HAMAP-Rule" id="MF_00111"/>
    </source>
</evidence>
<name>MURA_XANC8</name>
<dbReference type="EC" id="2.5.1.7" evidence="1"/>
<dbReference type="EMBL" id="CP000050">
    <property type="protein sequence ID" value="AAY48387.1"/>
    <property type="molecule type" value="Genomic_DNA"/>
</dbReference>
<dbReference type="RefSeq" id="WP_011037922.1">
    <property type="nucleotide sequence ID" value="NZ_CP155948.1"/>
</dbReference>
<dbReference type="SMR" id="Q4UX36"/>
<dbReference type="KEGG" id="xcb:XC_1318"/>
<dbReference type="HOGENOM" id="CLU_027387_0_0_6"/>
<dbReference type="UniPathway" id="UPA00219"/>
<dbReference type="Proteomes" id="UP000000420">
    <property type="component" value="Chromosome"/>
</dbReference>
<dbReference type="GO" id="GO:0005737">
    <property type="term" value="C:cytoplasm"/>
    <property type="evidence" value="ECO:0007669"/>
    <property type="project" value="UniProtKB-SubCell"/>
</dbReference>
<dbReference type="GO" id="GO:0008760">
    <property type="term" value="F:UDP-N-acetylglucosamine 1-carboxyvinyltransferase activity"/>
    <property type="evidence" value="ECO:0007669"/>
    <property type="project" value="UniProtKB-UniRule"/>
</dbReference>
<dbReference type="GO" id="GO:0051301">
    <property type="term" value="P:cell division"/>
    <property type="evidence" value="ECO:0007669"/>
    <property type="project" value="UniProtKB-KW"/>
</dbReference>
<dbReference type="GO" id="GO:0071555">
    <property type="term" value="P:cell wall organization"/>
    <property type="evidence" value="ECO:0007669"/>
    <property type="project" value="UniProtKB-KW"/>
</dbReference>
<dbReference type="GO" id="GO:0009252">
    <property type="term" value="P:peptidoglycan biosynthetic process"/>
    <property type="evidence" value="ECO:0007669"/>
    <property type="project" value="UniProtKB-UniRule"/>
</dbReference>
<dbReference type="GO" id="GO:0008360">
    <property type="term" value="P:regulation of cell shape"/>
    <property type="evidence" value="ECO:0007669"/>
    <property type="project" value="UniProtKB-KW"/>
</dbReference>
<dbReference type="GO" id="GO:0019277">
    <property type="term" value="P:UDP-N-acetylgalactosamine biosynthetic process"/>
    <property type="evidence" value="ECO:0007669"/>
    <property type="project" value="InterPro"/>
</dbReference>
<dbReference type="CDD" id="cd01555">
    <property type="entry name" value="UdpNAET"/>
    <property type="match status" value="1"/>
</dbReference>
<dbReference type="FunFam" id="3.65.10.10:FF:000002">
    <property type="entry name" value="UDP-N-acetylglucosamine 1-carboxyvinyltransferase"/>
    <property type="match status" value="1"/>
</dbReference>
<dbReference type="Gene3D" id="3.65.10.10">
    <property type="entry name" value="Enolpyruvate transferase domain"/>
    <property type="match status" value="2"/>
</dbReference>
<dbReference type="HAMAP" id="MF_00111">
    <property type="entry name" value="MurA"/>
    <property type="match status" value="1"/>
</dbReference>
<dbReference type="InterPro" id="IPR001986">
    <property type="entry name" value="Enolpyruvate_Tfrase_dom"/>
</dbReference>
<dbReference type="InterPro" id="IPR036968">
    <property type="entry name" value="Enolpyruvate_Tfrase_sf"/>
</dbReference>
<dbReference type="InterPro" id="IPR050068">
    <property type="entry name" value="MurA_subfamily"/>
</dbReference>
<dbReference type="InterPro" id="IPR013792">
    <property type="entry name" value="RNA3'P_cycl/enolpyr_Trfase_a/b"/>
</dbReference>
<dbReference type="InterPro" id="IPR005750">
    <property type="entry name" value="UDP_GlcNAc_COvinyl_MurA"/>
</dbReference>
<dbReference type="NCBIfam" id="TIGR01072">
    <property type="entry name" value="murA"/>
    <property type="match status" value="1"/>
</dbReference>
<dbReference type="NCBIfam" id="NF006873">
    <property type="entry name" value="PRK09369.1"/>
    <property type="match status" value="1"/>
</dbReference>
<dbReference type="PANTHER" id="PTHR43783">
    <property type="entry name" value="UDP-N-ACETYLGLUCOSAMINE 1-CARBOXYVINYLTRANSFERASE"/>
    <property type="match status" value="1"/>
</dbReference>
<dbReference type="PANTHER" id="PTHR43783:SF1">
    <property type="entry name" value="UDP-N-ACETYLGLUCOSAMINE 1-CARBOXYVINYLTRANSFERASE"/>
    <property type="match status" value="1"/>
</dbReference>
<dbReference type="Pfam" id="PF00275">
    <property type="entry name" value="EPSP_synthase"/>
    <property type="match status" value="1"/>
</dbReference>
<dbReference type="SUPFAM" id="SSF55205">
    <property type="entry name" value="EPT/RTPC-like"/>
    <property type="match status" value="1"/>
</dbReference>
<sequence length="424" mass="44445">MAKIVVTGGQALHGEVHISGAKNAVLPILCATLLADAPVEISNVPHLHDVITTVKLLSELGAEVTIDEGTLAKGRSILVDPRSVTHQIAPYELVKTMRASILVLGPLLARYGTAEVSLPGGCAIGSRPVDQHIKGLQALGADISVENGYIKATSNGRLKGGRYVFDMVSVTGTENVLMAAVLAEGTTVLENAAMEPEVTDLADCLIALGAQIEGAGTPRITVQGVERLGGGHHAVLPDRIETGTFLVAAAMTGGSVTVRRARPDTLDAVLDKLTEAGATITTTADSVTLDMHGKRPRAVNLTTAPYPAFPTDMQAQFMALNCVADGVGVINETIFENRFMHVNELLRLGADIQVEGHTAIVRGAERLSGAPVMATDLRASASLILAGLVADGDTTIDRIYHLDRGYENIEEKLGALGATIRRIA</sequence>
<organism>
    <name type="scientific">Xanthomonas campestris pv. campestris (strain 8004)</name>
    <dbReference type="NCBI Taxonomy" id="314565"/>
    <lineage>
        <taxon>Bacteria</taxon>
        <taxon>Pseudomonadati</taxon>
        <taxon>Pseudomonadota</taxon>
        <taxon>Gammaproteobacteria</taxon>
        <taxon>Lysobacterales</taxon>
        <taxon>Lysobacteraceae</taxon>
        <taxon>Xanthomonas</taxon>
    </lineage>
</organism>
<accession>Q4UX36</accession>
<feature type="chain" id="PRO_0000231301" description="UDP-N-acetylglucosamine 1-carboxyvinyltransferase">
    <location>
        <begin position="1"/>
        <end position="424"/>
    </location>
</feature>
<feature type="active site" description="Proton donor" evidence="1">
    <location>
        <position position="122"/>
    </location>
</feature>
<feature type="binding site" evidence="1">
    <location>
        <begin position="22"/>
        <end position="23"/>
    </location>
    <ligand>
        <name>phosphoenolpyruvate</name>
        <dbReference type="ChEBI" id="CHEBI:58702"/>
    </ligand>
</feature>
<feature type="binding site" evidence="1">
    <location>
        <position position="98"/>
    </location>
    <ligand>
        <name>UDP-N-acetyl-alpha-D-glucosamine</name>
        <dbReference type="ChEBI" id="CHEBI:57705"/>
    </ligand>
</feature>
<feature type="binding site" evidence="1">
    <location>
        <begin position="127"/>
        <end position="131"/>
    </location>
    <ligand>
        <name>UDP-N-acetyl-alpha-D-glucosamine</name>
        <dbReference type="ChEBI" id="CHEBI:57705"/>
    </ligand>
</feature>
<feature type="binding site" evidence="1">
    <location>
        <position position="312"/>
    </location>
    <ligand>
        <name>UDP-N-acetyl-alpha-D-glucosamine</name>
        <dbReference type="ChEBI" id="CHEBI:57705"/>
    </ligand>
</feature>
<feature type="binding site" evidence="1">
    <location>
        <position position="334"/>
    </location>
    <ligand>
        <name>UDP-N-acetyl-alpha-D-glucosamine</name>
        <dbReference type="ChEBI" id="CHEBI:57705"/>
    </ligand>
</feature>
<feature type="modified residue" description="2-(S-cysteinyl)pyruvic acid O-phosphothioketal" evidence="1">
    <location>
        <position position="122"/>
    </location>
</feature>
<proteinExistence type="inferred from homology"/>
<gene>
    <name evidence="1" type="primary">murA</name>
    <name type="ordered locus">XC_1318</name>
</gene>
<reference key="1">
    <citation type="journal article" date="2005" name="Genome Res.">
        <title>Comparative and functional genomic analyses of the pathogenicity of phytopathogen Xanthomonas campestris pv. campestris.</title>
        <authorList>
            <person name="Qian W."/>
            <person name="Jia Y."/>
            <person name="Ren S.-X."/>
            <person name="He Y.-Q."/>
            <person name="Feng J.-X."/>
            <person name="Lu L.-F."/>
            <person name="Sun Q."/>
            <person name="Ying G."/>
            <person name="Tang D.-J."/>
            <person name="Tang H."/>
            <person name="Wu W."/>
            <person name="Hao P."/>
            <person name="Wang L."/>
            <person name="Jiang B.-L."/>
            <person name="Zeng S."/>
            <person name="Gu W.-Y."/>
            <person name="Lu G."/>
            <person name="Rong L."/>
            <person name="Tian Y."/>
            <person name="Yao Z."/>
            <person name="Fu G."/>
            <person name="Chen B."/>
            <person name="Fang R."/>
            <person name="Qiang B."/>
            <person name="Chen Z."/>
            <person name="Zhao G.-P."/>
            <person name="Tang J.-L."/>
            <person name="He C."/>
        </authorList>
    </citation>
    <scope>NUCLEOTIDE SEQUENCE [LARGE SCALE GENOMIC DNA]</scope>
    <source>
        <strain>8004</strain>
    </source>
</reference>
<comment type="function">
    <text evidence="1">Cell wall formation. Adds enolpyruvyl to UDP-N-acetylglucosamine.</text>
</comment>
<comment type="catalytic activity">
    <reaction evidence="1">
        <text>phosphoenolpyruvate + UDP-N-acetyl-alpha-D-glucosamine = UDP-N-acetyl-3-O-(1-carboxyvinyl)-alpha-D-glucosamine + phosphate</text>
        <dbReference type="Rhea" id="RHEA:18681"/>
        <dbReference type="ChEBI" id="CHEBI:43474"/>
        <dbReference type="ChEBI" id="CHEBI:57705"/>
        <dbReference type="ChEBI" id="CHEBI:58702"/>
        <dbReference type="ChEBI" id="CHEBI:68483"/>
        <dbReference type="EC" id="2.5.1.7"/>
    </reaction>
</comment>
<comment type="pathway">
    <text evidence="1">Cell wall biogenesis; peptidoglycan biosynthesis.</text>
</comment>
<comment type="subcellular location">
    <subcellularLocation>
        <location evidence="1">Cytoplasm</location>
    </subcellularLocation>
</comment>
<comment type="similarity">
    <text evidence="1">Belongs to the EPSP synthase family. MurA subfamily.</text>
</comment>
<keyword id="KW-0131">Cell cycle</keyword>
<keyword id="KW-0132">Cell division</keyword>
<keyword id="KW-0133">Cell shape</keyword>
<keyword id="KW-0961">Cell wall biogenesis/degradation</keyword>
<keyword id="KW-0963">Cytoplasm</keyword>
<keyword id="KW-0573">Peptidoglycan synthesis</keyword>
<keyword id="KW-0670">Pyruvate</keyword>
<keyword id="KW-0808">Transferase</keyword>